<comment type="function">
    <text evidence="1">Catalyzes the transfer of an acetyl group from acetyl-CoA to tetrahydrodipicolinate.</text>
</comment>
<comment type="catalytic activity">
    <reaction evidence="1">
        <text>(S)-2,3,4,5-tetrahydrodipicolinate + acetyl-CoA + H2O = L-2-acetamido-6-oxoheptanedioate + CoA</text>
        <dbReference type="Rhea" id="RHEA:13085"/>
        <dbReference type="ChEBI" id="CHEBI:15377"/>
        <dbReference type="ChEBI" id="CHEBI:16845"/>
        <dbReference type="ChEBI" id="CHEBI:57287"/>
        <dbReference type="ChEBI" id="CHEBI:57288"/>
        <dbReference type="ChEBI" id="CHEBI:58117"/>
        <dbReference type="EC" id="2.3.1.89"/>
    </reaction>
</comment>
<comment type="pathway">
    <text evidence="1">Amino-acid biosynthesis; L-lysine biosynthesis via DAP pathway; LL-2,6-diaminopimelate from (S)-tetrahydrodipicolinate (acetylase route): step 1/3.</text>
</comment>
<comment type="similarity">
    <text evidence="1">Belongs to the transferase hexapeptide repeat family. DapH subfamily.</text>
</comment>
<reference key="1">
    <citation type="submission" date="2007-06" db="EMBL/GenBank/DDBJ databases">
        <title>Complete sequence of chromosome of Staphylococcus aureus subsp. aureus JH1.</title>
        <authorList>
            <consortium name="US DOE Joint Genome Institute"/>
            <person name="Copeland A."/>
            <person name="Lucas S."/>
            <person name="Lapidus A."/>
            <person name="Barry K."/>
            <person name="Detter J.C."/>
            <person name="Glavina del Rio T."/>
            <person name="Hammon N."/>
            <person name="Israni S."/>
            <person name="Dalin E."/>
            <person name="Tice H."/>
            <person name="Pitluck S."/>
            <person name="Chain P."/>
            <person name="Malfatti S."/>
            <person name="Shin M."/>
            <person name="Vergez L."/>
            <person name="Schmutz J."/>
            <person name="Larimer F."/>
            <person name="Land M."/>
            <person name="Hauser L."/>
            <person name="Kyrpides N."/>
            <person name="Ivanova N."/>
            <person name="Tomasz A."/>
            <person name="Richardson P."/>
        </authorList>
    </citation>
    <scope>NUCLEOTIDE SEQUENCE [LARGE SCALE GENOMIC DNA]</scope>
    <source>
        <strain>JH1</strain>
    </source>
</reference>
<gene>
    <name evidence="1" type="primary">dapH</name>
    <name type="ordered locus">SaurJH1_1487</name>
</gene>
<feature type="chain" id="PRO_0000376689" description="2,3,4,5-tetrahydropyridine-2,6-dicarboxylate N-acetyltransferase">
    <location>
        <begin position="1"/>
        <end position="239"/>
    </location>
</feature>
<evidence type="ECO:0000255" key="1">
    <source>
        <dbReference type="HAMAP-Rule" id="MF_01691"/>
    </source>
</evidence>
<accession>A6U1L8</accession>
<organism>
    <name type="scientific">Staphylococcus aureus (strain JH1)</name>
    <dbReference type="NCBI Taxonomy" id="359787"/>
    <lineage>
        <taxon>Bacteria</taxon>
        <taxon>Bacillati</taxon>
        <taxon>Bacillota</taxon>
        <taxon>Bacilli</taxon>
        <taxon>Bacillales</taxon>
        <taxon>Staphylococcaceae</taxon>
        <taxon>Staphylococcus</taxon>
    </lineage>
</organism>
<name>DAPH_STAA2</name>
<protein>
    <recommendedName>
        <fullName evidence="1">2,3,4,5-tetrahydropyridine-2,6-dicarboxylate N-acetyltransferase</fullName>
        <ecNumber evidence="1">2.3.1.89</ecNumber>
    </recommendedName>
    <alternativeName>
        <fullName evidence="1">Tetrahydrodipicolinate N-acetyltransferase</fullName>
        <shortName evidence="1">THP acetyltransferase</shortName>
        <shortName evidence="1">Tetrahydropicolinate acetylase</shortName>
    </alternativeName>
</protein>
<proteinExistence type="inferred from homology"/>
<sequence>MVQHLTAEEIIQYISDAKKSTPIKVYLNGNFEGITYPESFKVFGSEQSKVIFCEADDWKPFYEAYGSQFEDIEIEMDRRNSAIPLKDLTNTNARIEPGAFIREQAIIEDGAVVMMGATINIGAVVGEGTMIDMNATLGGRATTGKNVHVGAGAVLAGVIEPPSASPVIIEDDVLIGANAVILEGVRVGKGAIVAAGAIVTQDVPAGAVVAGTPAKVIKQASEVQDTKKEIVAALRKLND</sequence>
<keyword id="KW-0012">Acyltransferase</keyword>
<keyword id="KW-0028">Amino-acid biosynthesis</keyword>
<keyword id="KW-0220">Diaminopimelate biosynthesis</keyword>
<keyword id="KW-0457">Lysine biosynthesis</keyword>
<keyword id="KW-0677">Repeat</keyword>
<keyword id="KW-0808">Transferase</keyword>
<dbReference type="EC" id="2.3.1.89" evidence="1"/>
<dbReference type="EMBL" id="CP000736">
    <property type="protein sequence ID" value="ABR52336.1"/>
    <property type="molecule type" value="Genomic_DNA"/>
</dbReference>
<dbReference type="SMR" id="A6U1L8"/>
<dbReference type="KEGG" id="sah:SaurJH1_1487"/>
<dbReference type="HOGENOM" id="CLU_103751_0_0_9"/>
<dbReference type="UniPathway" id="UPA00034">
    <property type="reaction ID" value="UER00022"/>
</dbReference>
<dbReference type="GO" id="GO:0047200">
    <property type="term" value="F:tetrahydrodipicolinate N-acetyltransferase activity"/>
    <property type="evidence" value="ECO:0007669"/>
    <property type="project" value="UniProtKB-EC"/>
</dbReference>
<dbReference type="GO" id="GO:0019877">
    <property type="term" value="P:diaminopimelate biosynthetic process"/>
    <property type="evidence" value="ECO:0007669"/>
    <property type="project" value="UniProtKB-UniRule"/>
</dbReference>
<dbReference type="GO" id="GO:0009089">
    <property type="term" value="P:lysine biosynthetic process via diaminopimelate"/>
    <property type="evidence" value="ECO:0007669"/>
    <property type="project" value="UniProtKB-UniRule"/>
</dbReference>
<dbReference type="CDD" id="cd03350">
    <property type="entry name" value="LbH_THP_succinylT"/>
    <property type="match status" value="1"/>
</dbReference>
<dbReference type="Gene3D" id="2.160.10.10">
    <property type="entry name" value="Hexapeptide repeat proteins"/>
    <property type="match status" value="1"/>
</dbReference>
<dbReference type="Gene3D" id="3.30.70.250">
    <property type="entry name" value="Malonyl-CoA ACP transacylase, ACP-binding"/>
    <property type="match status" value="1"/>
</dbReference>
<dbReference type="HAMAP" id="MF_01691">
    <property type="entry name" value="DapH"/>
    <property type="match status" value="1"/>
</dbReference>
<dbReference type="InterPro" id="IPR019873">
    <property type="entry name" value="DapH"/>
</dbReference>
<dbReference type="InterPro" id="IPR013710">
    <property type="entry name" value="DapH_N"/>
</dbReference>
<dbReference type="InterPro" id="IPR001451">
    <property type="entry name" value="Hexapep"/>
</dbReference>
<dbReference type="InterPro" id="IPR018357">
    <property type="entry name" value="Hexapep_transf_CS"/>
</dbReference>
<dbReference type="InterPro" id="IPR050179">
    <property type="entry name" value="Trans_hexapeptide_repeat"/>
</dbReference>
<dbReference type="InterPro" id="IPR011004">
    <property type="entry name" value="Trimer_LpxA-like_sf"/>
</dbReference>
<dbReference type="NCBIfam" id="TIGR03532">
    <property type="entry name" value="DapD_Ac"/>
    <property type="match status" value="1"/>
</dbReference>
<dbReference type="PANTHER" id="PTHR43300:SF10">
    <property type="entry name" value="2,3,4,5-TETRAHYDROPYRIDINE-2,6-DICARBOXYLATE N-ACETYLTRANSFERASE"/>
    <property type="match status" value="1"/>
</dbReference>
<dbReference type="PANTHER" id="PTHR43300">
    <property type="entry name" value="ACETYLTRANSFERASE"/>
    <property type="match status" value="1"/>
</dbReference>
<dbReference type="Pfam" id="PF08503">
    <property type="entry name" value="DapH_N"/>
    <property type="match status" value="1"/>
</dbReference>
<dbReference type="Pfam" id="PF00132">
    <property type="entry name" value="Hexapep"/>
    <property type="match status" value="1"/>
</dbReference>
<dbReference type="Pfam" id="PF14602">
    <property type="entry name" value="Hexapep_2"/>
    <property type="match status" value="1"/>
</dbReference>
<dbReference type="SUPFAM" id="SSF51161">
    <property type="entry name" value="Trimeric LpxA-like enzymes"/>
    <property type="match status" value="1"/>
</dbReference>
<dbReference type="PROSITE" id="PS00101">
    <property type="entry name" value="HEXAPEP_TRANSFERASES"/>
    <property type="match status" value="1"/>
</dbReference>